<name>LTRA_LACLM</name>
<reference key="1">
    <citation type="journal article" date="1996" name="Mol. Microbiol.">
        <title>Splicing of a group II intron in a functional transfer gene of Lactococcus lactis.</title>
        <authorList>
            <person name="Shearman C."/>
            <person name="Godon J.-J."/>
            <person name="Gasson M."/>
        </authorList>
    </citation>
    <scope>NUCLEOTIDE SEQUENCE [GENOMIC DNA]</scope>
    <scope>FUNCTION</scope>
</reference>
<reference key="2">
    <citation type="journal article" date="2007" name="J. Bacteriol.">
        <title>The complete genome sequence of the lactic acid bacterial paradigm Lactococcus lactis subsp. cremoris MG1363.</title>
        <authorList>
            <person name="Wegmann U."/>
            <person name="O'Connell-Motherway M."/>
            <person name="Zomer A."/>
            <person name="Buist G."/>
            <person name="Shearman C."/>
            <person name="Canchaya C."/>
            <person name="Ventura M."/>
            <person name="Goesmann A."/>
            <person name="Gasson M.J."/>
            <person name="Kuipers O.P."/>
            <person name="van Sinderen D."/>
            <person name="Kok J."/>
        </authorList>
    </citation>
    <scope>NUCLEOTIDE SEQUENCE [LARGE SCALE GENOMIC DNA]</scope>
    <source>
        <strain>MG1363</strain>
    </source>
</reference>
<reference key="3">
    <citation type="journal article" date="2003" name="Nucleic Acids Res.">
        <title>A nomenclature for restriction enzymes, DNA methyltransferases, homing endonucleases and their genes.</title>
        <authorList>
            <person name="Roberts R.J."/>
            <person name="Belfort M."/>
            <person name="Bestor T."/>
            <person name="Bhagwat A.S."/>
            <person name="Bickle T.A."/>
            <person name="Bitinaite J."/>
            <person name="Blumenthal R.M."/>
            <person name="Degtyarev S.K."/>
            <person name="Dryden D.T."/>
            <person name="Dybvig K."/>
            <person name="Firman K."/>
            <person name="Gromova E.S."/>
            <person name="Gumport R.I."/>
            <person name="Halford S.E."/>
            <person name="Hattman S."/>
            <person name="Heitman J."/>
            <person name="Hornby D.P."/>
            <person name="Janulaitis A."/>
            <person name="Jeltsch A."/>
            <person name="Josephsen J."/>
            <person name="Kiss A."/>
            <person name="Klaenhammer T.R."/>
            <person name="Kobayashi I."/>
            <person name="Kong H."/>
            <person name="Krueger D.H."/>
            <person name="Lacks S."/>
            <person name="Marinus M.G."/>
            <person name="Miyahara M."/>
            <person name="Morgan R.D."/>
            <person name="Murray N.E."/>
            <person name="Nagaraja V."/>
            <person name="Piekarowicz A."/>
            <person name="Pingoud A."/>
            <person name="Raleigh E."/>
            <person name="Rao D.N."/>
            <person name="Reich N."/>
            <person name="Repin V.E."/>
            <person name="Selker E.U."/>
            <person name="Shaw P.C."/>
            <person name="Stein D.C."/>
            <person name="Stoddard B.L."/>
            <person name="Szybalski W."/>
            <person name="Trautner T.A."/>
            <person name="Van Etten J.L."/>
            <person name="Vitor J.M."/>
            <person name="Wilson G.G."/>
            <person name="Xu S.Y."/>
        </authorList>
    </citation>
    <scope>NOMENCLATURE</scope>
</reference>
<evidence type="ECO:0000255" key="1">
    <source>
        <dbReference type="PROSITE-ProRule" id="PRU00405"/>
    </source>
</evidence>
<evidence type="ECO:0000303" key="2">
    <source>
    </source>
</evidence>
<evidence type="ECO:0000303" key="3">
    <source>
    </source>
</evidence>
<evidence type="ECO:0000305" key="4"/>
<evidence type="ECO:0000305" key="5">
    <source>
    </source>
</evidence>
<proteinExistence type="evidence at protein level"/>
<organism>
    <name type="scientific">Lactococcus lactis subsp. cremoris (strain MG1363)</name>
    <dbReference type="NCBI Taxonomy" id="416870"/>
    <lineage>
        <taxon>Bacteria</taxon>
        <taxon>Bacillati</taxon>
        <taxon>Bacillota</taxon>
        <taxon>Bacilli</taxon>
        <taxon>Lactobacillales</taxon>
        <taxon>Streptococcaceae</taxon>
        <taxon>Lactococcus</taxon>
        <taxon>Lactococcus cremoris subsp. cremoris</taxon>
    </lineage>
</organism>
<sequence>MKPTMAILERISKNSQENIDEVFTRLYRYLLRPDIYYVAYQNLYSNKGASTKGILDDTADGFSEEKIKKIIQSLKDGTYYPQPVRRMYIAKKNSKKMRPLGIPTFTDKLIQEAVRIILESIYEPVFEDVSHGFRPQRSCHTALKTIKREFGGARWFVEGDIKGCFDNIDHVTLIGLINLKIKDMKMSQLIYKFLKAGYLENWQYHKTYSGTPQGGILSPLLANIYLHELDKFVLQLKMKFDRESPERITPEYRELHNEIKRISHRLKKLEGEEKAKVLLEYQEKRKRLPTLPCTSQTNKVLKYVRYADDFIISVKGSKEDCQWIKEQLKLFIHNKLKMELSEEKTLITHSSQPARFLGYDIRVRRSGTIKRSGKVKKRTLNGSVELLIPLQDKIRQFIFDKKIAIQKKDSSWFPVHRKYLIRSTDLEIITIYNSELRGICNYYGLASNFNQLNYFAYLMEYSCLKTIASKHKGTLSKTISMFKDGSGSWGIPYEIKQGKQRRYFANFSECKSPYQFTDEISQAPVLYGYARNTLENRLKAKCCELCGTSDENTSYEIHHVNKVKNLKGKEKWEMAMIAKQRKTLVVCFHCHRHVIHKHK</sequence>
<protein>
    <recommendedName>
        <fullName>Group II intron-encoded protein LtrA</fullName>
    </recommendedName>
    <domain>
        <recommendedName>
            <fullName>Reverse-transcriptase</fullName>
            <ecNumber>2.7.7.49</ecNumber>
        </recommendedName>
    </domain>
    <domain>
        <recommendedName>
            <fullName>RNA maturase</fullName>
            <ecNumber>3.1.-.-</ecNumber>
        </recommendedName>
    </domain>
    <domain>
        <recommendedName>
            <fullName>DNA endonuclease</fullName>
            <ecNumber>3.1.-.-</ecNumber>
        </recommendedName>
        <alternativeName>
            <fullName evidence="2">Homing endonuclease I-LlaI</fullName>
        </alternativeName>
    </domain>
</protein>
<gene>
    <name type="primary">ltrA</name>
    <name evidence="3" type="synonym">matR</name>
    <name type="ordered locus">llmg_1371</name>
</gene>
<feature type="chain" id="PRO_0000084513" description="Group II intron-encoded protein LtrA">
    <location>
        <begin position="1"/>
        <end position="599"/>
    </location>
</feature>
<feature type="domain" description="Reverse transcriptase" evidence="1">
    <location>
        <begin position="70"/>
        <end position="361"/>
    </location>
</feature>
<feature type="region of interest" description="Intron maturase type-2">
    <location>
        <begin position="381"/>
        <end position="549"/>
    </location>
</feature>
<accession>P0A3U1</accession>
<accession>A2RKZ3</accession>
<accession>Q57005</accession>
<accession>Q9FB65</accession>
<keyword id="KW-0255">Endonuclease</keyword>
<keyword id="KW-0378">Hydrolase</keyword>
<keyword id="KW-0404">Intron homing</keyword>
<keyword id="KW-0460">Magnesium</keyword>
<keyword id="KW-0511">Multifunctional enzyme</keyword>
<keyword id="KW-0540">Nuclease</keyword>
<keyword id="KW-0548">Nucleotidyltransferase</keyword>
<keyword id="KW-0695">RNA-directed DNA polymerase</keyword>
<keyword id="KW-0808">Transferase</keyword>
<comment type="function">
    <text evidence="5">Multifunctional protein that promotes group II intron splicing and mobility by acting both on RNA and DNA. It has three activities: reverse transcriptase (RT) for intron duplication, maturase to promote splicing, and DNA endonuclease for site-specific cleavage of recipient alleles. The intron-encoded protein promotes splicing by facilitating the formation of the catalytically active structure of the intron RNA. After splicing, the protein remains bound to the excised intron lariat RNA, forming ribonucleoprotein particles, and cleaving the antisense strand of the recipient DNA in the 3' exon. After DNA cleavage, retrohoming occurs by a target DNA-primed reverse transcription of the intron RNA that had reverse spliced into the sense strand of the recipient DNA. It also contributes to the recognition of the DNA target site and acts as a repressor of its own translation.</text>
</comment>
<comment type="catalytic activity">
    <reaction evidence="1">
        <text>DNA(n) + a 2'-deoxyribonucleoside 5'-triphosphate = DNA(n+1) + diphosphate</text>
        <dbReference type="Rhea" id="RHEA:22508"/>
        <dbReference type="Rhea" id="RHEA-COMP:17339"/>
        <dbReference type="Rhea" id="RHEA-COMP:17340"/>
        <dbReference type="ChEBI" id="CHEBI:33019"/>
        <dbReference type="ChEBI" id="CHEBI:61560"/>
        <dbReference type="ChEBI" id="CHEBI:173112"/>
        <dbReference type="EC" id="2.7.7.49"/>
    </reaction>
</comment>
<comment type="cofactor">
    <cofactor>
        <name>Mg(2+)</name>
        <dbReference type="ChEBI" id="CHEBI:18420"/>
    </cofactor>
</comment>
<comment type="subunit">
    <text evidence="4">Homodimer.</text>
</comment>
<comment type="biotechnology">
    <text>Mobile group II introns can be retargeted and used for highly specific chromosomal gene disruption in bacteria. Could be useful for genetic engineering and functional genomics in a wide variety of bacteria.</text>
</comment>
<comment type="miscellaneous">
    <text>The correct folding of LtrA seems to be facilitated by binding to the unspliced precursor or intron RNA. RNA would serve in part as a chaperone that promotes folding of the protein into an active conformation. Purified protein lacks endonuclease activity unless complexed with intron lariat RNA. It may preferentially function in cis by binding to the intron RNA from which it was translated.</text>
</comment>
<comment type="similarity">
    <text evidence="4">In the N-terminal section; belongs to the bacterial reverse transcriptase family.</text>
</comment>
<dbReference type="EC" id="2.7.7.49"/>
<dbReference type="EC" id="3.1.-.-"/>
<dbReference type="EMBL" id="X89922">
    <property type="protein sequence ID" value="CAA61996.1"/>
    <property type="molecule type" value="Genomic_DNA"/>
</dbReference>
<dbReference type="EMBL" id="AM406671">
    <property type="protein sequence ID" value="CAL97959.1"/>
    <property type="molecule type" value="Genomic_DNA"/>
</dbReference>
<dbReference type="PIR" id="S77648">
    <property type="entry name" value="S77648"/>
</dbReference>
<dbReference type="RefSeq" id="WP_011835237.1">
    <property type="nucleotide sequence ID" value="NC_009004.1"/>
</dbReference>
<dbReference type="RefSeq" id="YP_009091786.1">
    <property type="nucleotide sequence ID" value="NC_025249.1"/>
</dbReference>
<dbReference type="SMR" id="P0A3U1"/>
<dbReference type="STRING" id="416870.llmg_1371"/>
<dbReference type="REBASE" id="3057">
    <property type="entry name" value="I-LlaI"/>
</dbReference>
<dbReference type="KEGG" id="llm:llmg_1371"/>
<dbReference type="eggNOG" id="COG3344">
    <property type="taxonomic scope" value="Bacteria"/>
</dbReference>
<dbReference type="HOGENOM" id="CLU_013584_3_1_9"/>
<dbReference type="OrthoDB" id="9793236at2"/>
<dbReference type="PhylomeDB" id="P0A3U1"/>
<dbReference type="Proteomes" id="UP000000364">
    <property type="component" value="Chromosome"/>
</dbReference>
<dbReference type="GO" id="GO:0004519">
    <property type="term" value="F:endonuclease activity"/>
    <property type="evidence" value="ECO:0007669"/>
    <property type="project" value="UniProtKB-KW"/>
</dbReference>
<dbReference type="GO" id="GO:0003964">
    <property type="term" value="F:RNA-directed DNA polymerase activity"/>
    <property type="evidence" value="ECO:0007669"/>
    <property type="project" value="UniProtKB-KW"/>
</dbReference>
<dbReference type="GO" id="GO:0006314">
    <property type="term" value="P:intron homing"/>
    <property type="evidence" value="ECO:0007669"/>
    <property type="project" value="UniProtKB-KW"/>
</dbReference>
<dbReference type="GO" id="GO:0006397">
    <property type="term" value="P:mRNA processing"/>
    <property type="evidence" value="ECO:0007669"/>
    <property type="project" value="InterPro"/>
</dbReference>
<dbReference type="CDD" id="cd01651">
    <property type="entry name" value="RT_G2_intron"/>
    <property type="match status" value="1"/>
</dbReference>
<dbReference type="InterPro" id="IPR049030">
    <property type="entry name" value="AI2M-like_HNH"/>
</dbReference>
<dbReference type="InterPro" id="IPR043502">
    <property type="entry name" value="DNA/RNA_pol_sf"/>
</dbReference>
<dbReference type="InterPro" id="IPR024937">
    <property type="entry name" value="Domain_X"/>
</dbReference>
<dbReference type="InterPro" id="IPR051083">
    <property type="entry name" value="GrpII_Intron_Splice-Mob/Def"/>
</dbReference>
<dbReference type="InterPro" id="IPR000477">
    <property type="entry name" value="RT_dom"/>
</dbReference>
<dbReference type="PANTHER" id="PTHR34047">
    <property type="entry name" value="NUCLEAR INTRON MATURASE 1, MITOCHONDRIAL-RELATED"/>
    <property type="match status" value="1"/>
</dbReference>
<dbReference type="PANTHER" id="PTHR34047:SF8">
    <property type="entry name" value="PROTEIN YKFC"/>
    <property type="match status" value="1"/>
</dbReference>
<dbReference type="Pfam" id="PF21368">
    <property type="entry name" value="AI2M-like_HNH"/>
    <property type="match status" value="1"/>
</dbReference>
<dbReference type="Pfam" id="PF01348">
    <property type="entry name" value="Intron_maturas2"/>
    <property type="match status" value="1"/>
</dbReference>
<dbReference type="Pfam" id="PF00078">
    <property type="entry name" value="RVT_1"/>
    <property type="match status" value="2"/>
</dbReference>
<dbReference type="SUPFAM" id="SSF56672">
    <property type="entry name" value="DNA/RNA polymerases"/>
    <property type="match status" value="1"/>
</dbReference>
<dbReference type="PROSITE" id="PS50878">
    <property type="entry name" value="RT_POL"/>
    <property type="match status" value="1"/>
</dbReference>